<keyword id="KW-0687">Ribonucleoprotein</keyword>
<keyword id="KW-0689">Ribosomal protein</keyword>
<keyword id="KW-0694">RNA-binding</keyword>
<keyword id="KW-0699">rRNA-binding</keyword>
<accession>A0Q8Y8</accession>
<proteinExistence type="inferred from homology"/>
<protein>
    <recommendedName>
        <fullName evidence="1">Large ribosomal subunit protein bL9</fullName>
    </recommendedName>
    <alternativeName>
        <fullName evidence="2">50S ribosomal protein L9</fullName>
    </alternativeName>
</protein>
<reference key="1">
    <citation type="submission" date="2006-10" db="EMBL/GenBank/DDBJ databases">
        <authorList>
            <person name="Fleischmann R.D."/>
            <person name="Dodson R.J."/>
            <person name="Haft D.H."/>
            <person name="Merkel J.S."/>
            <person name="Nelson W.C."/>
            <person name="Fraser C.M."/>
        </authorList>
    </citation>
    <scope>NUCLEOTIDE SEQUENCE [LARGE SCALE GENOMIC DNA]</scope>
    <source>
        <strain>104</strain>
    </source>
</reference>
<organism>
    <name type="scientific">Mycobacterium avium (strain 104)</name>
    <dbReference type="NCBI Taxonomy" id="243243"/>
    <lineage>
        <taxon>Bacteria</taxon>
        <taxon>Bacillati</taxon>
        <taxon>Actinomycetota</taxon>
        <taxon>Actinomycetes</taxon>
        <taxon>Mycobacteriales</taxon>
        <taxon>Mycobacteriaceae</taxon>
        <taxon>Mycobacterium</taxon>
        <taxon>Mycobacterium avium complex (MAC)</taxon>
    </lineage>
</organism>
<comment type="function">
    <text evidence="1">Binds to the 23S rRNA.</text>
</comment>
<comment type="similarity">
    <text evidence="1">Belongs to the bacterial ribosomal protein bL9 family.</text>
</comment>
<gene>
    <name evidence="1" type="primary">rplI</name>
    <name type="ordered locus">MAV_0077</name>
</gene>
<feature type="chain" id="PRO_1000014809" description="Large ribosomal subunit protein bL9">
    <location>
        <begin position="1"/>
        <end position="152"/>
    </location>
</feature>
<dbReference type="EMBL" id="CP000479">
    <property type="protein sequence ID" value="ABK65373.1"/>
    <property type="molecule type" value="Genomic_DNA"/>
</dbReference>
<dbReference type="RefSeq" id="WP_009974245.1">
    <property type="nucleotide sequence ID" value="NC_008595.1"/>
</dbReference>
<dbReference type="SMR" id="A0Q8Y8"/>
<dbReference type="GeneID" id="75268003"/>
<dbReference type="KEGG" id="mav:MAV_0077"/>
<dbReference type="HOGENOM" id="CLU_078938_5_1_11"/>
<dbReference type="Proteomes" id="UP000001574">
    <property type="component" value="Chromosome"/>
</dbReference>
<dbReference type="GO" id="GO:1990904">
    <property type="term" value="C:ribonucleoprotein complex"/>
    <property type="evidence" value="ECO:0007669"/>
    <property type="project" value="UniProtKB-KW"/>
</dbReference>
<dbReference type="GO" id="GO:0005840">
    <property type="term" value="C:ribosome"/>
    <property type="evidence" value="ECO:0007669"/>
    <property type="project" value="UniProtKB-KW"/>
</dbReference>
<dbReference type="GO" id="GO:0019843">
    <property type="term" value="F:rRNA binding"/>
    <property type="evidence" value="ECO:0007669"/>
    <property type="project" value="UniProtKB-UniRule"/>
</dbReference>
<dbReference type="GO" id="GO:0003735">
    <property type="term" value="F:structural constituent of ribosome"/>
    <property type="evidence" value="ECO:0007669"/>
    <property type="project" value="InterPro"/>
</dbReference>
<dbReference type="GO" id="GO:0006412">
    <property type="term" value="P:translation"/>
    <property type="evidence" value="ECO:0007669"/>
    <property type="project" value="UniProtKB-UniRule"/>
</dbReference>
<dbReference type="FunFam" id="3.10.430.100:FF:000006">
    <property type="entry name" value="50S ribosomal protein L9"/>
    <property type="match status" value="1"/>
</dbReference>
<dbReference type="FunFam" id="3.40.5.10:FF:000003">
    <property type="entry name" value="50S ribosomal protein L9"/>
    <property type="match status" value="1"/>
</dbReference>
<dbReference type="Gene3D" id="3.10.430.100">
    <property type="entry name" value="Ribosomal protein L9, C-terminal domain"/>
    <property type="match status" value="1"/>
</dbReference>
<dbReference type="Gene3D" id="3.40.5.10">
    <property type="entry name" value="Ribosomal protein L9, N-terminal domain"/>
    <property type="match status" value="1"/>
</dbReference>
<dbReference type="HAMAP" id="MF_00503">
    <property type="entry name" value="Ribosomal_bL9"/>
    <property type="match status" value="1"/>
</dbReference>
<dbReference type="InterPro" id="IPR000244">
    <property type="entry name" value="Ribosomal_bL9"/>
</dbReference>
<dbReference type="InterPro" id="IPR009027">
    <property type="entry name" value="Ribosomal_bL9/RNase_H1_N"/>
</dbReference>
<dbReference type="InterPro" id="IPR020594">
    <property type="entry name" value="Ribosomal_bL9_bac/chp"/>
</dbReference>
<dbReference type="InterPro" id="IPR020069">
    <property type="entry name" value="Ribosomal_bL9_C"/>
</dbReference>
<dbReference type="InterPro" id="IPR036791">
    <property type="entry name" value="Ribosomal_bL9_C_sf"/>
</dbReference>
<dbReference type="InterPro" id="IPR020070">
    <property type="entry name" value="Ribosomal_bL9_N"/>
</dbReference>
<dbReference type="InterPro" id="IPR036935">
    <property type="entry name" value="Ribosomal_bL9_N_sf"/>
</dbReference>
<dbReference type="NCBIfam" id="TIGR00158">
    <property type="entry name" value="L9"/>
    <property type="match status" value="1"/>
</dbReference>
<dbReference type="PANTHER" id="PTHR21368">
    <property type="entry name" value="50S RIBOSOMAL PROTEIN L9"/>
    <property type="match status" value="1"/>
</dbReference>
<dbReference type="Pfam" id="PF03948">
    <property type="entry name" value="Ribosomal_L9_C"/>
    <property type="match status" value="1"/>
</dbReference>
<dbReference type="Pfam" id="PF01281">
    <property type="entry name" value="Ribosomal_L9_N"/>
    <property type="match status" value="1"/>
</dbReference>
<dbReference type="SUPFAM" id="SSF55658">
    <property type="entry name" value="L9 N-domain-like"/>
    <property type="match status" value="1"/>
</dbReference>
<dbReference type="SUPFAM" id="SSF55653">
    <property type="entry name" value="Ribosomal protein L9 C-domain"/>
    <property type="match status" value="1"/>
</dbReference>
<dbReference type="PROSITE" id="PS00651">
    <property type="entry name" value="RIBOSOMAL_L9"/>
    <property type="match status" value="1"/>
</dbReference>
<evidence type="ECO:0000255" key="1">
    <source>
        <dbReference type="HAMAP-Rule" id="MF_00503"/>
    </source>
</evidence>
<evidence type="ECO:0000305" key="2"/>
<name>RL9_MYCA1</name>
<sequence length="152" mass="16026">MKLILTADVDHLGAVGDTVEVKDGYGRNFLLPRGLAIVASRGAQKQADDIRRARETKAVRDLDHANELKTAIEALGPVTLPVKTAGDSGKLFGSVTAGDVVAAIKKAGGPNLDKRIVRLPKAHIKALGTHPVAVHLHPEVDVEVALEVVPQS</sequence>